<proteinExistence type="inferred from homology"/>
<keyword id="KW-0963">Cytoplasm</keyword>
<keyword id="KW-0251">Elongation factor</keyword>
<keyword id="KW-0342">GTP-binding</keyword>
<keyword id="KW-0547">Nucleotide-binding</keyword>
<keyword id="KW-0648">Protein biosynthesis</keyword>
<keyword id="KW-1185">Reference proteome</keyword>
<gene>
    <name evidence="1" type="primary">fusA</name>
    <name type="ordered locus">PERMA_1193</name>
</gene>
<evidence type="ECO:0000255" key="1">
    <source>
        <dbReference type="HAMAP-Rule" id="MF_00054"/>
    </source>
</evidence>
<feature type="chain" id="PRO_1000201479" description="Elongation factor G">
    <location>
        <begin position="1"/>
        <end position="694"/>
    </location>
</feature>
<feature type="domain" description="tr-type G">
    <location>
        <begin position="8"/>
        <end position="284"/>
    </location>
</feature>
<feature type="binding site" evidence="1">
    <location>
        <begin position="17"/>
        <end position="24"/>
    </location>
    <ligand>
        <name>GTP</name>
        <dbReference type="ChEBI" id="CHEBI:37565"/>
    </ligand>
</feature>
<feature type="binding site" evidence="1">
    <location>
        <begin position="81"/>
        <end position="85"/>
    </location>
    <ligand>
        <name>GTP</name>
        <dbReference type="ChEBI" id="CHEBI:37565"/>
    </ligand>
</feature>
<feature type="binding site" evidence="1">
    <location>
        <begin position="135"/>
        <end position="138"/>
    </location>
    <ligand>
        <name>GTP</name>
        <dbReference type="ChEBI" id="CHEBI:37565"/>
    </ligand>
</feature>
<comment type="function">
    <text evidence="1">Catalyzes the GTP-dependent ribosomal translocation step during translation elongation. During this step, the ribosome changes from the pre-translocational (PRE) to the post-translocational (POST) state as the newly formed A-site-bound peptidyl-tRNA and P-site-bound deacylated tRNA move to the P and E sites, respectively. Catalyzes the coordinated movement of the two tRNA molecules, the mRNA and conformational changes in the ribosome.</text>
</comment>
<comment type="subcellular location">
    <subcellularLocation>
        <location evidence="1">Cytoplasm</location>
    </subcellularLocation>
</comment>
<comment type="similarity">
    <text evidence="1">Belongs to the TRAFAC class translation factor GTPase superfamily. Classic translation factor GTPase family. EF-G/EF-2 subfamily.</text>
</comment>
<accession>C0QQM0</accession>
<name>EFG_PERMH</name>
<sequence length="694" mass="76817">MARPVPIEKLRNIGIVAHIDAGKTTTTERILFYTGKTYKIGEVHEGAATMDWMEQEKERGITITSATTAAYWKGYQLNIIDTPGHVDFGVEVVRSMKALDGIVFVFSSVEAVQPQSEANWRWADKFGVPRIAFVNKMDRTGADFFKVYDDIIEKLGAKPVPIQVPIGSEENFEGIVDLFEMKAYIWRGDELGAKYDVTDDIPSDVLPVAEEWREKMIEAIVETDEELMEKYLEGEELSVEDLKKALRKATISRELVPMLCGSAFKNKGVQPLLDAVIDFLPSPVDVPPVKGVNPDTGEEEERHASDNEPFCALAFKVMADPYAGQLTYFRVYSGVIKAGDTILIANKNKKVRVGRILRMHANQREEITEVHAGDIAAAVGLDTVTGDTLSDPNHPIVLESMEFPEPVIAMAIEPKTKSDQEKLSQVLNKFMKEDPTFKVTVDPETNQTLIHGMGELHLEIMVDRMKREYGIEVNVGKPQVAYKETIKKKAVGEGKFIRQSGGRGQYGHAIIEIEPLAEKDYEFVDKIVGGVIPKEFIPAVDAGIQEAMQSGVVAGYPMIGVKATLFDGSFHEVDSSEIAFKIAGSMAFREAAKKANPVLLEPIMLVEVDTPEEYMGDVMGDLSKRRGKILGSEKKGTTMTIKAEVPLAEMFGYATDLRSLTQGRATFSMVFEKYEEVPKNIADEIAGAKAKAES</sequence>
<dbReference type="EMBL" id="CP001230">
    <property type="protein sequence ID" value="ACO04875.1"/>
    <property type="molecule type" value="Genomic_DNA"/>
</dbReference>
<dbReference type="RefSeq" id="WP_015898979.1">
    <property type="nucleotide sequence ID" value="NC_012440.1"/>
</dbReference>
<dbReference type="SMR" id="C0QQM0"/>
<dbReference type="STRING" id="123214.PERMA_1193"/>
<dbReference type="PaxDb" id="123214-PERMA_1193"/>
<dbReference type="KEGG" id="pmx:PERMA_1193"/>
<dbReference type="eggNOG" id="COG0480">
    <property type="taxonomic scope" value="Bacteria"/>
</dbReference>
<dbReference type="HOGENOM" id="CLU_002794_4_1_0"/>
<dbReference type="OrthoDB" id="9804431at2"/>
<dbReference type="Proteomes" id="UP000001366">
    <property type="component" value="Chromosome"/>
</dbReference>
<dbReference type="GO" id="GO:0005737">
    <property type="term" value="C:cytoplasm"/>
    <property type="evidence" value="ECO:0007669"/>
    <property type="project" value="UniProtKB-SubCell"/>
</dbReference>
<dbReference type="GO" id="GO:0005525">
    <property type="term" value="F:GTP binding"/>
    <property type="evidence" value="ECO:0007669"/>
    <property type="project" value="UniProtKB-UniRule"/>
</dbReference>
<dbReference type="GO" id="GO:0003924">
    <property type="term" value="F:GTPase activity"/>
    <property type="evidence" value="ECO:0007669"/>
    <property type="project" value="InterPro"/>
</dbReference>
<dbReference type="GO" id="GO:0003746">
    <property type="term" value="F:translation elongation factor activity"/>
    <property type="evidence" value="ECO:0007669"/>
    <property type="project" value="UniProtKB-UniRule"/>
</dbReference>
<dbReference type="GO" id="GO:0032790">
    <property type="term" value="P:ribosome disassembly"/>
    <property type="evidence" value="ECO:0007669"/>
    <property type="project" value="TreeGrafter"/>
</dbReference>
<dbReference type="CDD" id="cd01886">
    <property type="entry name" value="EF-G"/>
    <property type="match status" value="1"/>
</dbReference>
<dbReference type="CDD" id="cd16262">
    <property type="entry name" value="EFG_III"/>
    <property type="match status" value="1"/>
</dbReference>
<dbReference type="CDD" id="cd01434">
    <property type="entry name" value="EFG_mtEFG1_IV"/>
    <property type="match status" value="1"/>
</dbReference>
<dbReference type="CDD" id="cd03713">
    <property type="entry name" value="EFG_mtEFG_C"/>
    <property type="match status" value="1"/>
</dbReference>
<dbReference type="CDD" id="cd04088">
    <property type="entry name" value="EFG_mtEFG_II"/>
    <property type="match status" value="1"/>
</dbReference>
<dbReference type="FunFam" id="2.40.30.10:FF:000006">
    <property type="entry name" value="Elongation factor G"/>
    <property type="match status" value="1"/>
</dbReference>
<dbReference type="FunFam" id="3.30.230.10:FF:000003">
    <property type="entry name" value="Elongation factor G"/>
    <property type="match status" value="1"/>
</dbReference>
<dbReference type="FunFam" id="3.30.70.240:FF:000001">
    <property type="entry name" value="Elongation factor G"/>
    <property type="match status" value="1"/>
</dbReference>
<dbReference type="FunFam" id="3.30.70.870:FF:000001">
    <property type="entry name" value="Elongation factor G"/>
    <property type="match status" value="1"/>
</dbReference>
<dbReference type="FunFam" id="3.40.50.300:FF:000029">
    <property type="entry name" value="Elongation factor G"/>
    <property type="match status" value="1"/>
</dbReference>
<dbReference type="Gene3D" id="3.30.230.10">
    <property type="match status" value="1"/>
</dbReference>
<dbReference type="Gene3D" id="3.30.70.240">
    <property type="match status" value="1"/>
</dbReference>
<dbReference type="Gene3D" id="3.30.70.870">
    <property type="entry name" value="Elongation Factor G (Translational Gtpase), domain 3"/>
    <property type="match status" value="1"/>
</dbReference>
<dbReference type="Gene3D" id="3.40.50.300">
    <property type="entry name" value="P-loop containing nucleotide triphosphate hydrolases"/>
    <property type="match status" value="1"/>
</dbReference>
<dbReference type="Gene3D" id="2.40.30.10">
    <property type="entry name" value="Translation factors"/>
    <property type="match status" value="1"/>
</dbReference>
<dbReference type="HAMAP" id="MF_00054_B">
    <property type="entry name" value="EF_G_EF_2_B"/>
    <property type="match status" value="1"/>
</dbReference>
<dbReference type="InterPro" id="IPR041095">
    <property type="entry name" value="EFG_II"/>
</dbReference>
<dbReference type="InterPro" id="IPR009022">
    <property type="entry name" value="EFG_III"/>
</dbReference>
<dbReference type="InterPro" id="IPR035647">
    <property type="entry name" value="EFG_III/V"/>
</dbReference>
<dbReference type="InterPro" id="IPR047872">
    <property type="entry name" value="EFG_IV"/>
</dbReference>
<dbReference type="InterPro" id="IPR035649">
    <property type="entry name" value="EFG_V"/>
</dbReference>
<dbReference type="InterPro" id="IPR000640">
    <property type="entry name" value="EFG_V-like"/>
</dbReference>
<dbReference type="InterPro" id="IPR004161">
    <property type="entry name" value="EFTu-like_2"/>
</dbReference>
<dbReference type="InterPro" id="IPR031157">
    <property type="entry name" value="G_TR_CS"/>
</dbReference>
<dbReference type="InterPro" id="IPR027417">
    <property type="entry name" value="P-loop_NTPase"/>
</dbReference>
<dbReference type="InterPro" id="IPR020568">
    <property type="entry name" value="Ribosomal_Su5_D2-typ_SF"/>
</dbReference>
<dbReference type="InterPro" id="IPR014721">
    <property type="entry name" value="Ribsml_uS5_D2-typ_fold_subgr"/>
</dbReference>
<dbReference type="InterPro" id="IPR005225">
    <property type="entry name" value="Small_GTP-bd"/>
</dbReference>
<dbReference type="InterPro" id="IPR000795">
    <property type="entry name" value="T_Tr_GTP-bd_dom"/>
</dbReference>
<dbReference type="InterPro" id="IPR009000">
    <property type="entry name" value="Transl_B-barrel_sf"/>
</dbReference>
<dbReference type="InterPro" id="IPR004540">
    <property type="entry name" value="Transl_elong_EFG/EF2"/>
</dbReference>
<dbReference type="InterPro" id="IPR005517">
    <property type="entry name" value="Transl_elong_EFG/EF2_IV"/>
</dbReference>
<dbReference type="NCBIfam" id="TIGR00484">
    <property type="entry name" value="EF-G"/>
    <property type="match status" value="1"/>
</dbReference>
<dbReference type="NCBIfam" id="NF009381">
    <property type="entry name" value="PRK12740.1-5"/>
    <property type="match status" value="1"/>
</dbReference>
<dbReference type="NCBIfam" id="NF009891">
    <property type="entry name" value="PRK13351.1-1"/>
    <property type="match status" value="1"/>
</dbReference>
<dbReference type="NCBIfam" id="TIGR00231">
    <property type="entry name" value="small_GTP"/>
    <property type="match status" value="1"/>
</dbReference>
<dbReference type="PANTHER" id="PTHR43261:SF1">
    <property type="entry name" value="RIBOSOME-RELEASING FACTOR 2, MITOCHONDRIAL"/>
    <property type="match status" value="1"/>
</dbReference>
<dbReference type="PANTHER" id="PTHR43261">
    <property type="entry name" value="TRANSLATION ELONGATION FACTOR G-RELATED"/>
    <property type="match status" value="1"/>
</dbReference>
<dbReference type="Pfam" id="PF00679">
    <property type="entry name" value="EFG_C"/>
    <property type="match status" value="1"/>
</dbReference>
<dbReference type="Pfam" id="PF14492">
    <property type="entry name" value="EFG_III"/>
    <property type="match status" value="1"/>
</dbReference>
<dbReference type="Pfam" id="PF03764">
    <property type="entry name" value="EFG_IV"/>
    <property type="match status" value="1"/>
</dbReference>
<dbReference type="Pfam" id="PF00009">
    <property type="entry name" value="GTP_EFTU"/>
    <property type="match status" value="1"/>
</dbReference>
<dbReference type="Pfam" id="PF03144">
    <property type="entry name" value="GTP_EFTU_D2"/>
    <property type="match status" value="1"/>
</dbReference>
<dbReference type="PRINTS" id="PR00315">
    <property type="entry name" value="ELONGATNFCT"/>
</dbReference>
<dbReference type="SMART" id="SM00838">
    <property type="entry name" value="EFG_C"/>
    <property type="match status" value="1"/>
</dbReference>
<dbReference type="SMART" id="SM00889">
    <property type="entry name" value="EFG_IV"/>
    <property type="match status" value="1"/>
</dbReference>
<dbReference type="SUPFAM" id="SSF54980">
    <property type="entry name" value="EF-G C-terminal domain-like"/>
    <property type="match status" value="2"/>
</dbReference>
<dbReference type="SUPFAM" id="SSF52540">
    <property type="entry name" value="P-loop containing nucleoside triphosphate hydrolases"/>
    <property type="match status" value="1"/>
</dbReference>
<dbReference type="SUPFAM" id="SSF54211">
    <property type="entry name" value="Ribosomal protein S5 domain 2-like"/>
    <property type="match status" value="1"/>
</dbReference>
<dbReference type="SUPFAM" id="SSF50447">
    <property type="entry name" value="Translation proteins"/>
    <property type="match status" value="1"/>
</dbReference>
<dbReference type="PROSITE" id="PS00301">
    <property type="entry name" value="G_TR_1"/>
    <property type="match status" value="1"/>
</dbReference>
<dbReference type="PROSITE" id="PS51722">
    <property type="entry name" value="G_TR_2"/>
    <property type="match status" value="1"/>
</dbReference>
<organism>
    <name type="scientific">Persephonella marina (strain DSM 14350 / EX-H1)</name>
    <dbReference type="NCBI Taxonomy" id="123214"/>
    <lineage>
        <taxon>Bacteria</taxon>
        <taxon>Pseudomonadati</taxon>
        <taxon>Aquificota</taxon>
        <taxon>Aquificia</taxon>
        <taxon>Aquificales</taxon>
        <taxon>Hydrogenothermaceae</taxon>
        <taxon>Persephonella</taxon>
    </lineage>
</organism>
<protein>
    <recommendedName>
        <fullName evidence="1">Elongation factor G</fullName>
        <shortName evidence="1">EF-G</shortName>
    </recommendedName>
</protein>
<reference key="1">
    <citation type="journal article" date="2009" name="J. Bacteriol.">
        <title>Complete and draft genome sequences of six members of the Aquificales.</title>
        <authorList>
            <person name="Reysenbach A.-L."/>
            <person name="Hamamura N."/>
            <person name="Podar M."/>
            <person name="Griffiths E."/>
            <person name="Ferreira S."/>
            <person name="Hochstein R."/>
            <person name="Heidelberg J."/>
            <person name="Johnson J."/>
            <person name="Mead D."/>
            <person name="Pohorille A."/>
            <person name="Sarmiento M."/>
            <person name="Schweighofer K."/>
            <person name="Seshadri R."/>
            <person name="Voytek M.A."/>
        </authorList>
    </citation>
    <scope>NUCLEOTIDE SEQUENCE [LARGE SCALE GENOMIC DNA]</scope>
    <source>
        <strain>DSM 14350 / EX-H1</strain>
    </source>
</reference>